<keyword id="KW-0414">Isoprene biosynthesis</keyword>
<keyword id="KW-0548">Nucleotidyltransferase</keyword>
<keyword id="KW-1185">Reference proteome</keyword>
<keyword id="KW-0808">Transferase</keyword>
<organism>
    <name type="scientific">Chromobacterium violaceum (strain ATCC 12472 / DSM 30191 / JCM 1249 / CCUG 213 / NBRC 12614 / NCIMB 9131 / NCTC 9757 / MK)</name>
    <dbReference type="NCBI Taxonomy" id="243365"/>
    <lineage>
        <taxon>Bacteria</taxon>
        <taxon>Pseudomonadati</taxon>
        <taxon>Pseudomonadota</taxon>
        <taxon>Betaproteobacteria</taxon>
        <taxon>Neisseriales</taxon>
        <taxon>Chromobacteriaceae</taxon>
        <taxon>Chromobacterium</taxon>
    </lineage>
</organism>
<comment type="function">
    <text evidence="1">Catalyzes the formation of 4-diphosphocytidyl-2-C-methyl-D-erythritol from CTP and 2-C-methyl-D-erythritol 4-phosphate (MEP).</text>
</comment>
<comment type="catalytic activity">
    <reaction evidence="1">
        <text>2-C-methyl-D-erythritol 4-phosphate + CTP + H(+) = 4-CDP-2-C-methyl-D-erythritol + diphosphate</text>
        <dbReference type="Rhea" id="RHEA:13429"/>
        <dbReference type="ChEBI" id="CHEBI:15378"/>
        <dbReference type="ChEBI" id="CHEBI:33019"/>
        <dbReference type="ChEBI" id="CHEBI:37563"/>
        <dbReference type="ChEBI" id="CHEBI:57823"/>
        <dbReference type="ChEBI" id="CHEBI:58262"/>
        <dbReference type="EC" id="2.7.7.60"/>
    </reaction>
</comment>
<comment type="pathway">
    <text evidence="1">Isoprenoid biosynthesis; isopentenyl diphosphate biosynthesis via DXP pathway; isopentenyl diphosphate from 1-deoxy-D-xylulose 5-phosphate: step 2/6.</text>
</comment>
<comment type="similarity">
    <text evidence="1">Belongs to the IspD/TarI cytidylyltransferase family. IspD subfamily.</text>
</comment>
<gene>
    <name evidence="1" type="primary">ispD</name>
    <name type="ordered locus">CV_1258</name>
</gene>
<proteinExistence type="inferred from homology"/>
<feature type="chain" id="PRO_0000075564" description="2-C-methyl-D-erythritol 4-phosphate cytidylyltransferase">
    <location>
        <begin position="1"/>
        <end position="225"/>
    </location>
</feature>
<feature type="site" description="Transition state stabilizer" evidence="1">
    <location>
        <position position="13"/>
    </location>
</feature>
<feature type="site" description="Transition state stabilizer" evidence="1">
    <location>
        <position position="20"/>
    </location>
</feature>
<feature type="site" description="Positions MEP for the nucleophilic attack" evidence="1">
    <location>
        <position position="151"/>
    </location>
</feature>
<feature type="site" description="Positions MEP for the nucleophilic attack" evidence="1">
    <location>
        <position position="205"/>
    </location>
</feature>
<name>ISPD_CHRVO</name>
<protein>
    <recommendedName>
        <fullName evidence="1">2-C-methyl-D-erythritol 4-phosphate cytidylyltransferase</fullName>
        <ecNumber evidence="1">2.7.7.60</ecNumber>
    </recommendedName>
    <alternativeName>
        <fullName evidence="1">4-diphosphocytidyl-2C-methyl-D-erythritol synthase</fullName>
    </alternativeName>
    <alternativeName>
        <fullName evidence="1">MEP cytidylyltransferase</fullName>
        <shortName evidence="1">MCT</shortName>
    </alternativeName>
</protein>
<evidence type="ECO:0000255" key="1">
    <source>
        <dbReference type="HAMAP-Rule" id="MF_00108"/>
    </source>
</evidence>
<dbReference type="EC" id="2.7.7.60" evidence="1"/>
<dbReference type="EMBL" id="AE016825">
    <property type="protein sequence ID" value="AAQ58933.1"/>
    <property type="molecule type" value="Genomic_DNA"/>
</dbReference>
<dbReference type="SMR" id="Q7NYL6"/>
<dbReference type="STRING" id="243365.CV_1258"/>
<dbReference type="KEGG" id="cvi:CV_1258"/>
<dbReference type="eggNOG" id="COG1211">
    <property type="taxonomic scope" value="Bacteria"/>
</dbReference>
<dbReference type="HOGENOM" id="CLU_061281_3_0_4"/>
<dbReference type="UniPathway" id="UPA00056">
    <property type="reaction ID" value="UER00093"/>
</dbReference>
<dbReference type="Proteomes" id="UP000001424">
    <property type="component" value="Chromosome"/>
</dbReference>
<dbReference type="GO" id="GO:0050518">
    <property type="term" value="F:2-C-methyl-D-erythritol 4-phosphate cytidylyltransferase activity"/>
    <property type="evidence" value="ECO:0007669"/>
    <property type="project" value="UniProtKB-UniRule"/>
</dbReference>
<dbReference type="GO" id="GO:0019288">
    <property type="term" value="P:isopentenyl diphosphate biosynthetic process, methylerythritol 4-phosphate pathway"/>
    <property type="evidence" value="ECO:0007669"/>
    <property type="project" value="UniProtKB-UniRule"/>
</dbReference>
<dbReference type="CDD" id="cd02516">
    <property type="entry name" value="CDP-ME_synthetase"/>
    <property type="match status" value="1"/>
</dbReference>
<dbReference type="FunFam" id="3.90.550.10:FF:000003">
    <property type="entry name" value="2-C-methyl-D-erythritol 4-phosphate cytidylyltransferase"/>
    <property type="match status" value="1"/>
</dbReference>
<dbReference type="Gene3D" id="3.90.550.10">
    <property type="entry name" value="Spore Coat Polysaccharide Biosynthesis Protein SpsA, Chain A"/>
    <property type="match status" value="1"/>
</dbReference>
<dbReference type="HAMAP" id="MF_00108">
    <property type="entry name" value="IspD"/>
    <property type="match status" value="1"/>
</dbReference>
<dbReference type="InterPro" id="IPR001228">
    <property type="entry name" value="IspD"/>
</dbReference>
<dbReference type="InterPro" id="IPR034683">
    <property type="entry name" value="IspD/TarI"/>
</dbReference>
<dbReference type="InterPro" id="IPR050088">
    <property type="entry name" value="IspD/TarI_cytidylyltransf_bact"/>
</dbReference>
<dbReference type="InterPro" id="IPR018294">
    <property type="entry name" value="ISPD_synthase_CS"/>
</dbReference>
<dbReference type="InterPro" id="IPR029044">
    <property type="entry name" value="Nucleotide-diphossugar_trans"/>
</dbReference>
<dbReference type="NCBIfam" id="TIGR00453">
    <property type="entry name" value="ispD"/>
    <property type="match status" value="1"/>
</dbReference>
<dbReference type="PANTHER" id="PTHR32125">
    <property type="entry name" value="2-C-METHYL-D-ERYTHRITOL 4-PHOSPHATE CYTIDYLYLTRANSFERASE, CHLOROPLASTIC"/>
    <property type="match status" value="1"/>
</dbReference>
<dbReference type="PANTHER" id="PTHR32125:SF4">
    <property type="entry name" value="2-C-METHYL-D-ERYTHRITOL 4-PHOSPHATE CYTIDYLYLTRANSFERASE, CHLOROPLASTIC"/>
    <property type="match status" value="1"/>
</dbReference>
<dbReference type="Pfam" id="PF01128">
    <property type="entry name" value="IspD"/>
    <property type="match status" value="1"/>
</dbReference>
<dbReference type="SUPFAM" id="SSF53448">
    <property type="entry name" value="Nucleotide-diphospho-sugar transferases"/>
    <property type="match status" value="1"/>
</dbReference>
<dbReference type="PROSITE" id="PS01295">
    <property type="entry name" value="ISPD"/>
    <property type="match status" value="1"/>
</dbReference>
<reference key="1">
    <citation type="journal article" date="2003" name="Proc. Natl. Acad. Sci. U.S.A.">
        <title>The complete genome sequence of Chromobacterium violaceum reveals remarkable and exploitable bacterial adaptability.</title>
        <authorList>
            <person name="Vasconcelos A.T.R."/>
            <person name="de Almeida D.F."/>
            <person name="Hungria M."/>
            <person name="Guimaraes C.T."/>
            <person name="Antonio R.V."/>
            <person name="Almeida F.C."/>
            <person name="de Almeida L.G.P."/>
            <person name="de Almeida R."/>
            <person name="Alves-Gomes J.A."/>
            <person name="Andrade E.M."/>
            <person name="Araripe J."/>
            <person name="de Araujo M.F.F."/>
            <person name="Astolfi-Filho S."/>
            <person name="Azevedo V."/>
            <person name="Baptista A.J."/>
            <person name="Bataus L.A.M."/>
            <person name="Batista J.S."/>
            <person name="Belo A."/>
            <person name="van den Berg C."/>
            <person name="Bogo M."/>
            <person name="Bonatto S."/>
            <person name="Bordignon J."/>
            <person name="Brigido M.M."/>
            <person name="Brito C.A."/>
            <person name="Brocchi M."/>
            <person name="Burity H.A."/>
            <person name="Camargo A.A."/>
            <person name="Cardoso D.D.P."/>
            <person name="Carneiro N.P."/>
            <person name="Carraro D.M."/>
            <person name="Carvalho C.M.B."/>
            <person name="Cascardo J.C.M."/>
            <person name="Cavada B.S."/>
            <person name="Chueire L.M.O."/>
            <person name="Creczynski-Pasa T.B."/>
            <person name="Cunha-Junior N.C."/>
            <person name="Fagundes N."/>
            <person name="Falcao C.L."/>
            <person name="Fantinatti F."/>
            <person name="Farias I.P."/>
            <person name="Felipe M.S.S."/>
            <person name="Ferrari L.P."/>
            <person name="Ferro J.A."/>
            <person name="Ferro M.I.T."/>
            <person name="Franco G.R."/>
            <person name="Freitas N.S.A."/>
            <person name="Furlan L.R."/>
            <person name="Gazzinelli R.T."/>
            <person name="Gomes E.A."/>
            <person name="Goncalves P.R."/>
            <person name="Grangeiro T.B."/>
            <person name="Grattapaglia D."/>
            <person name="Grisard E.C."/>
            <person name="Hanna E.S."/>
            <person name="Jardim S.N."/>
            <person name="Laurino J."/>
            <person name="Leoi L.C.T."/>
            <person name="Lima L.F.A."/>
            <person name="Loureiro M.F."/>
            <person name="Lyra M.C.C.P."/>
            <person name="Madeira H.M.F."/>
            <person name="Manfio G.P."/>
            <person name="Maranhao A.Q."/>
            <person name="Martins W.S."/>
            <person name="di Mauro S.M.Z."/>
            <person name="de Medeiros S.R.B."/>
            <person name="Meissner R.V."/>
            <person name="Moreira M.A.M."/>
            <person name="Nascimento F.F."/>
            <person name="Nicolas M.F."/>
            <person name="Oliveira J.G."/>
            <person name="Oliveira S.C."/>
            <person name="Paixao R.F.C."/>
            <person name="Parente J.A."/>
            <person name="Pedrosa F.O."/>
            <person name="Pena S.D.J."/>
            <person name="Pereira J.O."/>
            <person name="Pereira M."/>
            <person name="Pinto L.S.R.C."/>
            <person name="Pinto L.S."/>
            <person name="Porto J.I.R."/>
            <person name="Potrich D.P."/>
            <person name="Ramalho-Neto C.E."/>
            <person name="Reis A.M.M."/>
            <person name="Rigo L.U."/>
            <person name="Rondinelli E."/>
            <person name="Santos E.B.P."/>
            <person name="Santos F.R."/>
            <person name="Schneider M.P.C."/>
            <person name="Seuanez H.N."/>
            <person name="Silva A.M.R."/>
            <person name="da Silva A.L.C."/>
            <person name="Silva D.W."/>
            <person name="Silva R."/>
            <person name="Simoes I.C."/>
            <person name="Simon D."/>
            <person name="Soares C.M.A."/>
            <person name="Soares R.B.A."/>
            <person name="Souza E.M."/>
            <person name="Souza K.R.L."/>
            <person name="Souza R.C."/>
            <person name="Steffens M.B.R."/>
            <person name="Steindel M."/>
            <person name="Teixeira S.R."/>
            <person name="Urmenyi T."/>
            <person name="Vettore A."/>
            <person name="Wassem R."/>
            <person name="Zaha A."/>
            <person name="Simpson A.J.G."/>
        </authorList>
    </citation>
    <scope>NUCLEOTIDE SEQUENCE [LARGE SCALE GENOMIC DNA]</scope>
    <source>
        <strain>ATCC 12472 / DSM 30191 / JCM 1249 / CCUG 213 / NBRC 12614 / NCIMB 9131 / NCTC 9757 / MK</strain>
    </source>
</reference>
<sequence>MIALVPAAGSGSRFGAPSPKQYLQLNGKPLMWHTLATVAAVPDVDEVAVVISPQDEWFDDFAWDLPKLSVHRVGGASRAQSVASGLAALACADDDWVLVHDAARCCLSVAAVERLIAALSGHAVGGLLALPVPDTVKRADIDGHVAATVPRNGLWLAQTPQMFRAGLLARALSSAAAEDITDEASAVERLGVKPLLVEGDAQNFKITYPRDLALARAILAARDEY</sequence>
<accession>Q7NYL6</accession>